<protein>
    <recommendedName>
        <fullName evidence="1">5'-nucleotidase SurE</fullName>
        <ecNumber evidence="1">3.1.3.5</ecNumber>
    </recommendedName>
    <alternativeName>
        <fullName evidence="1">Nucleoside 5'-monophosphate phosphohydrolase</fullName>
    </alternativeName>
</protein>
<evidence type="ECO:0000255" key="1">
    <source>
        <dbReference type="HAMAP-Rule" id="MF_00060"/>
    </source>
</evidence>
<comment type="function">
    <text evidence="1">Nucleotidase that shows phosphatase activity on nucleoside 5'-monophosphates.</text>
</comment>
<comment type="catalytic activity">
    <reaction evidence="1">
        <text>a ribonucleoside 5'-phosphate + H2O = a ribonucleoside + phosphate</text>
        <dbReference type="Rhea" id="RHEA:12484"/>
        <dbReference type="ChEBI" id="CHEBI:15377"/>
        <dbReference type="ChEBI" id="CHEBI:18254"/>
        <dbReference type="ChEBI" id="CHEBI:43474"/>
        <dbReference type="ChEBI" id="CHEBI:58043"/>
        <dbReference type="EC" id="3.1.3.5"/>
    </reaction>
</comment>
<comment type="cofactor">
    <cofactor evidence="1">
        <name>a divalent metal cation</name>
        <dbReference type="ChEBI" id="CHEBI:60240"/>
    </cofactor>
    <text evidence="1">Binds 1 divalent metal cation per subunit.</text>
</comment>
<comment type="subcellular location">
    <subcellularLocation>
        <location evidence="1">Cytoplasm</location>
    </subcellularLocation>
</comment>
<comment type="similarity">
    <text evidence="1">Belongs to the SurE nucleotidase family.</text>
</comment>
<gene>
    <name evidence="1" type="primary">surE</name>
    <name type="ordered locus">Suden_1536</name>
</gene>
<reference key="1">
    <citation type="journal article" date="2008" name="Appl. Environ. Microbiol.">
        <title>Genome of the epsilonproteobacterial chemolithoautotroph Sulfurimonas denitrificans.</title>
        <authorList>
            <person name="Sievert S.M."/>
            <person name="Scott K.M."/>
            <person name="Klotz M.G."/>
            <person name="Chain P.S.G."/>
            <person name="Hauser L.J."/>
            <person name="Hemp J."/>
            <person name="Huegler M."/>
            <person name="Land M."/>
            <person name="Lapidus A."/>
            <person name="Larimer F.W."/>
            <person name="Lucas S."/>
            <person name="Malfatti S.A."/>
            <person name="Meyer F."/>
            <person name="Paulsen I.T."/>
            <person name="Ren Q."/>
            <person name="Simon J."/>
            <person name="Bailey K."/>
            <person name="Diaz E."/>
            <person name="Fitzpatrick K.A."/>
            <person name="Glover B."/>
            <person name="Gwatney N."/>
            <person name="Korajkic A."/>
            <person name="Long A."/>
            <person name="Mobberley J.M."/>
            <person name="Pantry S.N."/>
            <person name="Pazder G."/>
            <person name="Peterson S."/>
            <person name="Quintanilla J.D."/>
            <person name="Sprinkle R."/>
            <person name="Stephens J."/>
            <person name="Thomas P."/>
            <person name="Vaughn R."/>
            <person name="Weber M.J."/>
            <person name="Wooten L.L."/>
        </authorList>
    </citation>
    <scope>NUCLEOTIDE SEQUENCE [LARGE SCALE GENOMIC DNA]</scope>
    <source>
        <strain>ATCC 33889 / DSM 1251</strain>
    </source>
</reference>
<sequence>MRYKILVTNDDGYEAKGLRALVKALKELEDVEVMVVAPASEKSACGHSLTLVRPLRFVGVDDNFFKLDDGTPSDCVYLALSTIYVDSKPDLLISGINRGSNMGEDITYSGTAAGAMEGVLHDVPSIAISQVMDFSDPQGDFTLAQKVIKELVIKIKNGSFPLPQREFLNVNIPPDLDSTDNRDAKMVVTYAGYRFYANDSHIHRNPRGEEFYWLGLHPLDFLPREGIKGISDYEAIEAGNISITPIQLDMSAYKSMNKLKEWIE</sequence>
<accession>Q30QB8</accession>
<name>SURE_SULDN</name>
<feature type="chain" id="PRO_0000235665" description="5'-nucleotidase SurE">
    <location>
        <begin position="1"/>
        <end position="264"/>
    </location>
</feature>
<feature type="binding site" evidence="1">
    <location>
        <position position="10"/>
    </location>
    <ligand>
        <name>a divalent metal cation</name>
        <dbReference type="ChEBI" id="CHEBI:60240"/>
    </ligand>
</feature>
<feature type="binding site" evidence="1">
    <location>
        <position position="11"/>
    </location>
    <ligand>
        <name>a divalent metal cation</name>
        <dbReference type="ChEBI" id="CHEBI:60240"/>
    </ligand>
</feature>
<feature type="binding site" evidence="1">
    <location>
        <position position="43"/>
    </location>
    <ligand>
        <name>a divalent metal cation</name>
        <dbReference type="ChEBI" id="CHEBI:60240"/>
    </ligand>
</feature>
<feature type="binding site" evidence="1">
    <location>
        <position position="97"/>
    </location>
    <ligand>
        <name>a divalent metal cation</name>
        <dbReference type="ChEBI" id="CHEBI:60240"/>
    </ligand>
</feature>
<organism>
    <name type="scientific">Sulfurimonas denitrificans (strain ATCC 33889 / DSM 1251)</name>
    <name type="common">Thiomicrospira denitrificans (strain ATCC 33889 / DSM 1251)</name>
    <dbReference type="NCBI Taxonomy" id="326298"/>
    <lineage>
        <taxon>Bacteria</taxon>
        <taxon>Pseudomonadati</taxon>
        <taxon>Campylobacterota</taxon>
        <taxon>Epsilonproteobacteria</taxon>
        <taxon>Campylobacterales</taxon>
        <taxon>Sulfurimonadaceae</taxon>
        <taxon>Sulfurimonas</taxon>
    </lineage>
</organism>
<keyword id="KW-0963">Cytoplasm</keyword>
<keyword id="KW-0378">Hydrolase</keyword>
<keyword id="KW-0479">Metal-binding</keyword>
<keyword id="KW-0547">Nucleotide-binding</keyword>
<keyword id="KW-1185">Reference proteome</keyword>
<dbReference type="EC" id="3.1.3.5" evidence="1"/>
<dbReference type="EMBL" id="CP000153">
    <property type="protein sequence ID" value="ABB44813.1"/>
    <property type="molecule type" value="Genomic_DNA"/>
</dbReference>
<dbReference type="RefSeq" id="WP_011373165.1">
    <property type="nucleotide sequence ID" value="NC_007575.1"/>
</dbReference>
<dbReference type="SMR" id="Q30QB8"/>
<dbReference type="STRING" id="326298.Suden_1536"/>
<dbReference type="KEGG" id="tdn:Suden_1536"/>
<dbReference type="eggNOG" id="COG0496">
    <property type="taxonomic scope" value="Bacteria"/>
</dbReference>
<dbReference type="HOGENOM" id="CLU_045192_1_2_7"/>
<dbReference type="OrthoDB" id="9780815at2"/>
<dbReference type="Proteomes" id="UP000002714">
    <property type="component" value="Chromosome"/>
</dbReference>
<dbReference type="GO" id="GO:0005737">
    <property type="term" value="C:cytoplasm"/>
    <property type="evidence" value="ECO:0007669"/>
    <property type="project" value="UniProtKB-SubCell"/>
</dbReference>
<dbReference type="GO" id="GO:0008254">
    <property type="term" value="F:3'-nucleotidase activity"/>
    <property type="evidence" value="ECO:0007669"/>
    <property type="project" value="TreeGrafter"/>
</dbReference>
<dbReference type="GO" id="GO:0008253">
    <property type="term" value="F:5'-nucleotidase activity"/>
    <property type="evidence" value="ECO:0007669"/>
    <property type="project" value="UniProtKB-UniRule"/>
</dbReference>
<dbReference type="GO" id="GO:0004309">
    <property type="term" value="F:exopolyphosphatase activity"/>
    <property type="evidence" value="ECO:0007669"/>
    <property type="project" value="TreeGrafter"/>
</dbReference>
<dbReference type="GO" id="GO:0046872">
    <property type="term" value="F:metal ion binding"/>
    <property type="evidence" value="ECO:0007669"/>
    <property type="project" value="UniProtKB-UniRule"/>
</dbReference>
<dbReference type="GO" id="GO:0000166">
    <property type="term" value="F:nucleotide binding"/>
    <property type="evidence" value="ECO:0007669"/>
    <property type="project" value="UniProtKB-KW"/>
</dbReference>
<dbReference type="Gene3D" id="3.40.1210.10">
    <property type="entry name" value="Survival protein SurE-like phosphatase/nucleotidase"/>
    <property type="match status" value="1"/>
</dbReference>
<dbReference type="HAMAP" id="MF_00060">
    <property type="entry name" value="SurE"/>
    <property type="match status" value="1"/>
</dbReference>
<dbReference type="InterPro" id="IPR030048">
    <property type="entry name" value="SurE"/>
</dbReference>
<dbReference type="InterPro" id="IPR002828">
    <property type="entry name" value="SurE-like_Pase/nucleotidase"/>
</dbReference>
<dbReference type="InterPro" id="IPR036523">
    <property type="entry name" value="SurE-like_sf"/>
</dbReference>
<dbReference type="NCBIfam" id="NF001490">
    <property type="entry name" value="PRK00346.1-4"/>
    <property type="match status" value="1"/>
</dbReference>
<dbReference type="NCBIfam" id="NF001494">
    <property type="entry name" value="PRK00346.2-4"/>
    <property type="match status" value="1"/>
</dbReference>
<dbReference type="NCBIfam" id="TIGR00087">
    <property type="entry name" value="surE"/>
    <property type="match status" value="1"/>
</dbReference>
<dbReference type="PANTHER" id="PTHR30457">
    <property type="entry name" value="5'-NUCLEOTIDASE SURE"/>
    <property type="match status" value="1"/>
</dbReference>
<dbReference type="PANTHER" id="PTHR30457:SF12">
    <property type="entry name" value="5'_3'-NUCLEOTIDASE SURE"/>
    <property type="match status" value="1"/>
</dbReference>
<dbReference type="Pfam" id="PF01975">
    <property type="entry name" value="SurE"/>
    <property type="match status" value="1"/>
</dbReference>
<dbReference type="SUPFAM" id="SSF64167">
    <property type="entry name" value="SurE-like"/>
    <property type="match status" value="1"/>
</dbReference>
<proteinExistence type="inferred from homology"/>